<dbReference type="EMBL" id="CP000009">
    <property type="protein sequence ID" value="AAW60158.1"/>
    <property type="molecule type" value="Genomic_DNA"/>
</dbReference>
<dbReference type="RefSeq" id="WP_011251961.1">
    <property type="nucleotide sequence ID" value="NZ_LT900338.1"/>
</dbReference>
<dbReference type="SMR" id="Q5FTY8"/>
<dbReference type="STRING" id="290633.GOX0375"/>
<dbReference type="GeneID" id="56904641"/>
<dbReference type="KEGG" id="gox:GOX0375"/>
<dbReference type="eggNOG" id="COG0091">
    <property type="taxonomic scope" value="Bacteria"/>
</dbReference>
<dbReference type="HOGENOM" id="CLU_083987_3_0_5"/>
<dbReference type="Proteomes" id="UP000006375">
    <property type="component" value="Chromosome"/>
</dbReference>
<dbReference type="GO" id="GO:0022625">
    <property type="term" value="C:cytosolic large ribosomal subunit"/>
    <property type="evidence" value="ECO:0007669"/>
    <property type="project" value="TreeGrafter"/>
</dbReference>
<dbReference type="GO" id="GO:0019843">
    <property type="term" value="F:rRNA binding"/>
    <property type="evidence" value="ECO:0007669"/>
    <property type="project" value="UniProtKB-UniRule"/>
</dbReference>
<dbReference type="GO" id="GO:0003735">
    <property type="term" value="F:structural constituent of ribosome"/>
    <property type="evidence" value="ECO:0007669"/>
    <property type="project" value="InterPro"/>
</dbReference>
<dbReference type="GO" id="GO:0006412">
    <property type="term" value="P:translation"/>
    <property type="evidence" value="ECO:0007669"/>
    <property type="project" value="UniProtKB-UniRule"/>
</dbReference>
<dbReference type="CDD" id="cd00336">
    <property type="entry name" value="Ribosomal_L22"/>
    <property type="match status" value="1"/>
</dbReference>
<dbReference type="Gene3D" id="3.90.470.10">
    <property type="entry name" value="Ribosomal protein L22/L17"/>
    <property type="match status" value="1"/>
</dbReference>
<dbReference type="HAMAP" id="MF_01331_B">
    <property type="entry name" value="Ribosomal_uL22_B"/>
    <property type="match status" value="1"/>
</dbReference>
<dbReference type="InterPro" id="IPR001063">
    <property type="entry name" value="Ribosomal_uL22"/>
</dbReference>
<dbReference type="InterPro" id="IPR005727">
    <property type="entry name" value="Ribosomal_uL22_bac/chlpt-type"/>
</dbReference>
<dbReference type="InterPro" id="IPR047867">
    <property type="entry name" value="Ribosomal_uL22_bac/org-type"/>
</dbReference>
<dbReference type="InterPro" id="IPR018260">
    <property type="entry name" value="Ribosomal_uL22_CS"/>
</dbReference>
<dbReference type="InterPro" id="IPR036394">
    <property type="entry name" value="Ribosomal_uL22_sf"/>
</dbReference>
<dbReference type="NCBIfam" id="TIGR01044">
    <property type="entry name" value="rplV_bact"/>
    <property type="match status" value="1"/>
</dbReference>
<dbReference type="PANTHER" id="PTHR13501">
    <property type="entry name" value="CHLOROPLAST 50S RIBOSOMAL PROTEIN L22-RELATED"/>
    <property type="match status" value="1"/>
</dbReference>
<dbReference type="PANTHER" id="PTHR13501:SF8">
    <property type="entry name" value="LARGE RIBOSOMAL SUBUNIT PROTEIN UL22M"/>
    <property type="match status" value="1"/>
</dbReference>
<dbReference type="Pfam" id="PF00237">
    <property type="entry name" value="Ribosomal_L22"/>
    <property type="match status" value="1"/>
</dbReference>
<dbReference type="SUPFAM" id="SSF54843">
    <property type="entry name" value="Ribosomal protein L22"/>
    <property type="match status" value="1"/>
</dbReference>
<dbReference type="PROSITE" id="PS00464">
    <property type="entry name" value="RIBOSOMAL_L22"/>
    <property type="match status" value="1"/>
</dbReference>
<name>RL22_GLUOX</name>
<keyword id="KW-1185">Reference proteome</keyword>
<keyword id="KW-0687">Ribonucleoprotein</keyword>
<keyword id="KW-0689">Ribosomal protein</keyword>
<keyword id="KW-0694">RNA-binding</keyword>
<keyword id="KW-0699">rRNA-binding</keyword>
<proteinExistence type="inferred from homology"/>
<reference key="1">
    <citation type="journal article" date="2005" name="Nat. Biotechnol.">
        <title>Complete genome sequence of the acetic acid bacterium Gluconobacter oxydans.</title>
        <authorList>
            <person name="Prust C."/>
            <person name="Hoffmeister M."/>
            <person name="Liesegang H."/>
            <person name="Wiezer A."/>
            <person name="Fricke W.F."/>
            <person name="Ehrenreich A."/>
            <person name="Gottschalk G."/>
            <person name="Deppenmeier U."/>
        </authorList>
    </citation>
    <scope>NUCLEOTIDE SEQUENCE [LARGE SCALE GENOMIC DNA]</scope>
    <source>
        <strain>621H</strain>
    </source>
</reference>
<protein>
    <recommendedName>
        <fullName evidence="1">Large ribosomal subunit protein uL22</fullName>
    </recommendedName>
    <alternativeName>
        <fullName evidence="3">50S ribosomal protein L22</fullName>
    </alternativeName>
</protein>
<sequence length="142" mass="15801">MSKPKHIRTLADTEAQAVARNIRVSPRKLNLVAAMIRNQPADKAIAALTFSRRRIAQQVKKTLESAVANAENNHQLDVDQLVVKTAEVGKSIVMKRFHARGRGRSARVEKFFSHLKIVVAERAEAPEETKPSRGTNKEQKAA</sequence>
<gene>
    <name evidence="1" type="primary">rplV</name>
    <name type="ordered locus">GOX0375</name>
</gene>
<comment type="function">
    <text evidence="1">This protein binds specifically to 23S rRNA; its binding is stimulated by other ribosomal proteins, e.g. L4, L17, and L20. It is important during the early stages of 50S assembly. It makes multiple contacts with different domains of the 23S rRNA in the assembled 50S subunit and ribosome (By similarity).</text>
</comment>
<comment type="function">
    <text evidence="1">The globular domain of the protein is located near the polypeptide exit tunnel on the outside of the subunit, while an extended beta-hairpin is found that lines the wall of the exit tunnel in the center of the 70S ribosome.</text>
</comment>
<comment type="subunit">
    <text evidence="1">Part of the 50S ribosomal subunit.</text>
</comment>
<comment type="similarity">
    <text evidence="1">Belongs to the universal ribosomal protein uL22 family.</text>
</comment>
<accession>Q5FTY8</accession>
<feature type="chain" id="PRO_0000243154" description="Large ribosomal subunit protein uL22">
    <location>
        <begin position="1"/>
        <end position="142"/>
    </location>
</feature>
<feature type="region of interest" description="Disordered" evidence="2">
    <location>
        <begin position="122"/>
        <end position="142"/>
    </location>
</feature>
<evidence type="ECO:0000255" key="1">
    <source>
        <dbReference type="HAMAP-Rule" id="MF_01331"/>
    </source>
</evidence>
<evidence type="ECO:0000256" key="2">
    <source>
        <dbReference type="SAM" id="MobiDB-lite"/>
    </source>
</evidence>
<evidence type="ECO:0000305" key="3"/>
<organism>
    <name type="scientific">Gluconobacter oxydans (strain 621H)</name>
    <name type="common">Gluconobacter suboxydans</name>
    <dbReference type="NCBI Taxonomy" id="290633"/>
    <lineage>
        <taxon>Bacteria</taxon>
        <taxon>Pseudomonadati</taxon>
        <taxon>Pseudomonadota</taxon>
        <taxon>Alphaproteobacteria</taxon>
        <taxon>Acetobacterales</taxon>
        <taxon>Acetobacteraceae</taxon>
        <taxon>Gluconobacter</taxon>
    </lineage>
</organism>